<gene>
    <name type="primary">CAV2</name>
</gene>
<name>CAV2_AOTNA</name>
<reference key="1">
    <citation type="submission" date="2006-09" db="EMBL/GenBank/DDBJ databases">
        <title>NISC comparative sequencing initiative.</title>
        <authorList>
            <person name="Antonellis A."/>
            <person name="Ayele K."/>
            <person name="Benjamin B."/>
            <person name="Blakesley R.W."/>
            <person name="Boakye A."/>
            <person name="Bouffard G.G."/>
            <person name="Brinkley C."/>
            <person name="Brooks S."/>
            <person name="Chu G."/>
            <person name="Coleman H."/>
            <person name="Engle J."/>
            <person name="Gestole M."/>
            <person name="Greene A."/>
            <person name="Guan X."/>
            <person name="Gupta J."/>
            <person name="Haghighi P."/>
            <person name="Han J."/>
            <person name="Hansen N."/>
            <person name="Ho S.-L."/>
            <person name="Hu P."/>
            <person name="Hunter G."/>
            <person name="Hurle B."/>
            <person name="Idol J.R."/>
            <person name="Kwong P."/>
            <person name="Laric P."/>
            <person name="Larson S."/>
            <person name="Lee-Lin S.-Q."/>
            <person name="Legaspi R."/>
            <person name="Madden M."/>
            <person name="Maduro Q.L."/>
            <person name="Maduro V.B."/>
            <person name="Margulies E.H."/>
            <person name="Masiello C."/>
            <person name="Maskeri B."/>
            <person name="McDowell J."/>
            <person name="Mojidi H.A."/>
            <person name="Mullikin J.C."/>
            <person name="Oestreicher J.S."/>
            <person name="Park M."/>
            <person name="Portnoy M.E."/>
            <person name="Prasad A."/>
            <person name="Puri O."/>
            <person name="Reddix-Dugue N."/>
            <person name="Schandler K."/>
            <person name="Schueler M.G."/>
            <person name="Sison C."/>
            <person name="Stantripop S."/>
            <person name="Stephen E."/>
            <person name="Taye A."/>
            <person name="Thomas J.W."/>
            <person name="Thomas P.J."/>
            <person name="Tsipouri V."/>
            <person name="Ung L."/>
            <person name="Vogt J.L."/>
            <person name="Wetherby K.D."/>
            <person name="Young A."/>
            <person name="Green E.D."/>
        </authorList>
    </citation>
    <scope>NUCLEOTIDE SEQUENCE [LARGE SCALE GENOMIC DNA]</scope>
</reference>
<feature type="chain" id="PRO_0000260375" description="Caveolin-2">
    <location>
        <begin position="1"/>
        <end position="162"/>
    </location>
</feature>
<feature type="topological domain" description="Cytoplasmic" evidence="4">
    <location>
        <begin position="1"/>
        <end position="86"/>
    </location>
</feature>
<feature type="intramembrane region" description="Helical" evidence="4">
    <location>
        <begin position="87"/>
        <end position="107"/>
    </location>
</feature>
<feature type="topological domain" description="Cytoplasmic" evidence="4">
    <location>
        <begin position="108"/>
        <end position="162"/>
    </location>
</feature>
<feature type="modified residue" description="Phosphotyrosine; by SRC" evidence="2">
    <location>
        <position position="19"/>
    </location>
</feature>
<feature type="modified residue" description="Phosphoserine" evidence="3">
    <location>
        <position position="20"/>
    </location>
</feature>
<feature type="modified residue" description="Phosphoserine" evidence="2">
    <location>
        <position position="23"/>
    </location>
</feature>
<feature type="modified residue" description="Phosphotyrosine; by SRC" evidence="2">
    <location>
        <position position="27"/>
    </location>
</feature>
<feature type="modified residue" description="Phosphoserine" evidence="2">
    <location>
        <position position="36"/>
    </location>
</feature>
<keyword id="KW-1003">Cell membrane</keyword>
<keyword id="KW-0963">Cytoplasm</keyword>
<keyword id="KW-0333">Golgi apparatus</keyword>
<keyword id="KW-0472">Membrane</keyword>
<keyword id="KW-0539">Nucleus</keyword>
<keyword id="KW-0597">Phosphoprotein</keyword>
<keyword id="KW-1185">Reference proteome</keyword>
<organism>
    <name type="scientific">Aotus nancymaae</name>
    <name type="common">Ma's night monkey</name>
    <dbReference type="NCBI Taxonomy" id="37293"/>
    <lineage>
        <taxon>Eukaryota</taxon>
        <taxon>Metazoa</taxon>
        <taxon>Chordata</taxon>
        <taxon>Craniata</taxon>
        <taxon>Vertebrata</taxon>
        <taxon>Euteleostomi</taxon>
        <taxon>Mammalia</taxon>
        <taxon>Eutheria</taxon>
        <taxon>Euarchontoglires</taxon>
        <taxon>Primates</taxon>
        <taxon>Haplorrhini</taxon>
        <taxon>Platyrrhini</taxon>
        <taxon>Aotidae</taxon>
        <taxon>Aotus</taxon>
    </lineage>
</organism>
<comment type="function">
    <text evidence="1">May act as a scaffolding protein within caveolar membranes. Interacts directly with G-protein alpha subunits and can functionally regulate their activity. Acts as an accessory protein in conjunction with CAV1 in targeting to lipid rafts and driving caveolae formation. The Ser-36 phosphorylated form has a role in modulating mitosis in endothelial cells. Positive regulator of cellular mitogenesis of the MAPK signaling pathway. Required for the insulin-stimulated nuclear translocation and activation of MAPK1 and STAT3, and the subsequent regulation of cell cycle progression (By similarity).</text>
</comment>
<comment type="subunit">
    <text evidence="1">Monomer or homodimer (By similarity). Interacts with CAV1; the interaction forms a stable heterooligomeric complex that is required for targeting to lipid rafts and for caveolae formation. Tyrosine phosphorylated forms do not form heterooligomers with the Tyr-19-phosphorylated form existing as a monomer or dimer, and the Tyr-27-form as a monomer only. Interacts (tyrosine phosphorylated form) with the SH2 domain-containing proteins, RASA1, NCK1 and SRC. Interacts (tyrosine phosphorylated form) with INSR, the interaction (Tyr-27-phosphorylated form) is increased on insulin stimulation. Interacts (Tyr-19 phosphorylated form) with MAPK1 (phosphorylated form); the interaction, promoted by insulin, leads to nuclear location and MAPK1 activation. Interacts with STAT3; the interaction is increased on insulin-induced tyrosine phosphorylation leading to STAT activation (By similarity).</text>
</comment>
<comment type="subcellular location">
    <subcellularLocation>
        <location evidence="1">Nucleus</location>
    </subcellularLocation>
    <subcellularLocation>
        <location evidence="1">Cytoplasm</location>
    </subcellularLocation>
    <subcellularLocation>
        <location>Golgi apparatus membrane</location>
        <topology>Peripheral membrane protein</topology>
    </subcellularLocation>
    <subcellularLocation>
        <location>Cell membrane</location>
        <topology>Peripheral membrane protein</topology>
    </subcellularLocation>
    <subcellularLocation>
        <location>Membrane</location>
        <location>Caveola</location>
        <topology>Peripheral membrane protein</topology>
    </subcellularLocation>
    <text evidence="1">Potential hairpin-like structure in the membrane. Membrane protein of caveolae. Tyr-19-phosphorylated form is enriched at sites of cell-cell contact and is translocated to the nucleus in complex with MAPK1 in response to insulin (By similarity). Tyr-27-phosphorylated form is located both in the cytoplasm and plasma membrane. CAV1-mediated Ser-23-phosphorylated form locates to the plasma membrane. Ser-36-phosphorylated form resides in intracellular compartments.</text>
</comment>
<comment type="PTM">
    <text evidence="1">Phosphorylated on serine and tyrosine residues. CAV1 promotes phosphorylation on Ser-23 which then targets the complex to the plasma membrane, lipid rafts and caveolae. Phosphorylation on Ser-36 appears to modulate mitosis in endothelial cells (By similarity). Phosphorylation on both Tyr-19 and Tyr-27 is required for insulin-induced 'Ser-727' phosphorylation of STAT3 and its activation. Phosphorylation on Tyr-19 is required for insulin-induced phosphorylation of MAPK1 and DNA binding of STAT3. Tyrosine phosphorylation is induced by both EGF and insulin (By. similarity).</text>
</comment>
<comment type="similarity">
    <text evidence="5">Belongs to the caveolin family.</text>
</comment>
<dbReference type="EMBL" id="DP000197">
    <property type="protein sequence ID" value="ABJ08882.1"/>
    <property type="molecule type" value="Genomic_DNA"/>
</dbReference>
<dbReference type="RefSeq" id="XP_012312411.1">
    <property type="nucleotide sequence ID" value="XM_012456988.2"/>
</dbReference>
<dbReference type="SMR" id="Q07DW0"/>
<dbReference type="STRING" id="37293.ENSANAP00000004759"/>
<dbReference type="Ensembl" id="ENSANAT00000022516.1">
    <property type="protein sequence ID" value="ENSANAP00000004759.1"/>
    <property type="gene ID" value="ENSANAG00000020482.1"/>
</dbReference>
<dbReference type="GeneID" id="105720433"/>
<dbReference type="KEGG" id="anan:105720433"/>
<dbReference type="CTD" id="858"/>
<dbReference type="GeneTree" id="ENSGT00950000183006"/>
<dbReference type="OMA" id="TRIFMDD"/>
<dbReference type="OrthoDB" id="5917823at2759"/>
<dbReference type="Proteomes" id="UP000233020">
    <property type="component" value="Unplaced"/>
</dbReference>
<dbReference type="GO" id="GO:0002080">
    <property type="term" value="C:acrosomal membrane"/>
    <property type="evidence" value="ECO:0007669"/>
    <property type="project" value="Ensembl"/>
</dbReference>
<dbReference type="GO" id="GO:0005901">
    <property type="term" value="C:caveola"/>
    <property type="evidence" value="ECO:0000250"/>
    <property type="project" value="UniProtKB"/>
</dbReference>
<dbReference type="GO" id="GO:0002095">
    <property type="term" value="C:caveolar macromolecular signaling complex"/>
    <property type="evidence" value="ECO:0007669"/>
    <property type="project" value="Ensembl"/>
</dbReference>
<dbReference type="GO" id="GO:0005925">
    <property type="term" value="C:focal adhesion"/>
    <property type="evidence" value="ECO:0007669"/>
    <property type="project" value="Ensembl"/>
</dbReference>
<dbReference type="GO" id="GO:0000139">
    <property type="term" value="C:Golgi membrane"/>
    <property type="evidence" value="ECO:0007669"/>
    <property type="project" value="UniProtKB-SubCell"/>
</dbReference>
<dbReference type="GO" id="GO:0005634">
    <property type="term" value="C:nucleus"/>
    <property type="evidence" value="ECO:0007669"/>
    <property type="project" value="UniProtKB-SubCell"/>
</dbReference>
<dbReference type="GO" id="GO:0048471">
    <property type="term" value="C:perinuclear region of cytoplasm"/>
    <property type="evidence" value="ECO:0000250"/>
    <property type="project" value="UniProtKB"/>
</dbReference>
<dbReference type="GO" id="GO:0044853">
    <property type="term" value="C:plasma membrane raft"/>
    <property type="evidence" value="ECO:0000250"/>
    <property type="project" value="UniProtKB"/>
</dbReference>
<dbReference type="GO" id="GO:0042383">
    <property type="term" value="C:sarcolemma"/>
    <property type="evidence" value="ECO:0007669"/>
    <property type="project" value="TreeGrafter"/>
</dbReference>
<dbReference type="GO" id="GO:0030133">
    <property type="term" value="C:transport vesicle"/>
    <property type="evidence" value="ECO:0007669"/>
    <property type="project" value="Ensembl"/>
</dbReference>
<dbReference type="GO" id="GO:0031748">
    <property type="term" value="F:D1 dopamine receptor binding"/>
    <property type="evidence" value="ECO:0000250"/>
    <property type="project" value="UniProtKB"/>
</dbReference>
<dbReference type="GO" id="GO:0046982">
    <property type="term" value="F:protein heterodimerization activity"/>
    <property type="evidence" value="ECO:0007669"/>
    <property type="project" value="Ensembl"/>
</dbReference>
<dbReference type="GO" id="GO:0042803">
    <property type="term" value="F:protein homodimerization activity"/>
    <property type="evidence" value="ECO:0007669"/>
    <property type="project" value="Ensembl"/>
</dbReference>
<dbReference type="GO" id="GO:0019901">
    <property type="term" value="F:protein kinase binding"/>
    <property type="evidence" value="ECO:0007669"/>
    <property type="project" value="Ensembl"/>
</dbReference>
<dbReference type="GO" id="GO:0030674">
    <property type="term" value="F:protein-macromolecule adaptor activity"/>
    <property type="evidence" value="ECO:0007669"/>
    <property type="project" value="Ensembl"/>
</dbReference>
<dbReference type="GO" id="GO:0097110">
    <property type="term" value="F:scaffold protein binding"/>
    <property type="evidence" value="ECO:0007669"/>
    <property type="project" value="Ensembl"/>
</dbReference>
<dbReference type="GO" id="GO:0071711">
    <property type="term" value="P:basement membrane organization"/>
    <property type="evidence" value="ECO:0007669"/>
    <property type="project" value="Ensembl"/>
</dbReference>
<dbReference type="GO" id="GO:0070836">
    <property type="term" value="P:caveola assembly"/>
    <property type="evidence" value="ECO:0000250"/>
    <property type="project" value="UniProtKB"/>
</dbReference>
<dbReference type="GO" id="GO:0007029">
    <property type="term" value="P:endoplasmic reticulum organization"/>
    <property type="evidence" value="ECO:0000250"/>
    <property type="project" value="UniProtKB"/>
</dbReference>
<dbReference type="GO" id="GO:0001935">
    <property type="term" value="P:endothelial cell proliferation"/>
    <property type="evidence" value="ECO:0007669"/>
    <property type="project" value="Ensembl"/>
</dbReference>
<dbReference type="GO" id="GO:0008286">
    <property type="term" value="P:insulin receptor signaling pathway"/>
    <property type="evidence" value="ECO:0007669"/>
    <property type="project" value="Ensembl"/>
</dbReference>
<dbReference type="GO" id="GO:0007005">
    <property type="term" value="P:mitochondrion organization"/>
    <property type="evidence" value="ECO:0000250"/>
    <property type="project" value="UniProtKB"/>
</dbReference>
<dbReference type="GO" id="GO:0001937">
    <property type="term" value="P:negative regulation of endothelial cell proliferation"/>
    <property type="evidence" value="ECO:0000250"/>
    <property type="project" value="UniProtKB"/>
</dbReference>
<dbReference type="GO" id="GO:0014859">
    <property type="term" value="P:negative regulation of skeletal muscle cell proliferation"/>
    <property type="evidence" value="ECO:0007669"/>
    <property type="project" value="Ensembl"/>
</dbReference>
<dbReference type="GO" id="GO:0030512">
    <property type="term" value="P:negative regulation of transforming growth factor beta receptor signaling pathway"/>
    <property type="evidence" value="ECO:0007669"/>
    <property type="project" value="Ensembl"/>
</dbReference>
<dbReference type="GO" id="GO:0044794">
    <property type="term" value="P:positive regulation by host of viral process"/>
    <property type="evidence" value="ECO:0007669"/>
    <property type="project" value="Ensembl"/>
</dbReference>
<dbReference type="GO" id="GO:0060161">
    <property type="term" value="P:positive regulation of dopamine receptor signaling pathway"/>
    <property type="evidence" value="ECO:0000250"/>
    <property type="project" value="UniProtKB"/>
</dbReference>
<dbReference type="GO" id="GO:0001938">
    <property type="term" value="P:positive regulation of endothelial cell proliferation"/>
    <property type="evidence" value="ECO:0007669"/>
    <property type="project" value="Ensembl"/>
</dbReference>
<dbReference type="GO" id="GO:0043410">
    <property type="term" value="P:positive regulation of MAPK cascade"/>
    <property type="evidence" value="ECO:0007669"/>
    <property type="project" value="Ensembl"/>
</dbReference>
<dbReference type="GO" id="GO:0019065">
    <property type="term" value="P:receptor-mediated endocytosis of virus by host cell"/>
    <property type="evidence" value="ECO:0007669"/>
    <property type="project" value="Ensembl"/>
</dbReference>
<dbReference type="GO" id="GO:0051480">
    <property type="term" value="P:regulation of cytosolic calcium ion concentration"/>
    <property type="evidence" value="ECO:0007669"/>
    <property type="project" value="TreeGrafter"/>
</dbReference>
<dbReference type="GO" id="GO:0007088">
    <property type="term" value="P:regulation of mitotic nuclear division"/>
    <property type="evidence" value="ECO:0007669"/>
    <property type="project" value="Ensembl"/>
</dbReference>
<dbReference type="GO" id="GO:0014856">
    <property type="term" value="P:skeletal muscle cell proliferation"/>
    <property type="evidence" value="ECO:0007669"/>
    <property type="project" value="Ensembl"/>
</dbReference>
<dbReference type="GO" id="GO:0048741">
    <property type="term" value="P:skeletal muscle fiber development"/>
    <property type="evidence" value="ECO:0000250"/>
    <property type="project" value="UniProtKB"/>
</dbReference>
<dbReference type="GO" id="GO:0007179">
    <property type="term" value="P:transforming growth factor beta receptor signaling pathway"/>
    <property type="evidence" value="ECO:0007669"/>
    <property type="project" value="Ensembl"/>
</dbReference>
<dbReference type="GO" id="GO:0048278">
    <property type="term" value="P:vesicle docking"/>
    <property type="evidence" value="ECO:0000250"/>
    <property type="project" value="UniProtKB"/>
</dbReference>
<dbReference type="GO" id="GO:0006906">
    <property type="term" value="P:vesicle fusion"/>
    <property type="evidence" value="ECO:0000250"/>
    <property type="project" value="UniProtKB"/>
</dbReference>
<dbReference type="GO" id="GO:0019076">
    <property type="term" value="P:viral release from host cell"/>
    <property type="evidence" value="ECO:0007669"/>
    <property type="project" value="Ensembl"/>
</dbReference>
<dbReference type="InterPro" id="IPR001612">
    <property type="entry name" value="Caveolin"/>
</dbReference>
<dbReference type="InterPro" id="IPR018361">
    <property type="entry name" value="Caveolin_CS"/>
</dbReference>
<dbReference type="PANTHER" id="PTHR10844">
    <property type="entry name" value="CAVEOLIN"/>
    <property type="match status" value="1"/>
</dbReference>
<dbReference type="PANTHER" id="PTHR10844:SF3">
    <property type="entry name" value="CAVEOLIN-2"/>
    <property type="match status" value="1"/>
</dbReference>
<dbReference type="Pfam" id="PF01146">
    <property type="entry name" value="Caveolin"/>
    <property type="match status" value="1"/>
</dbReference>
<dbReference type="PROSITE" id="PS01210">
    <property type="entry name" value="CAVEOLIN"/>
    <property type="match status" value="1"/>
</dbReference>
<proteinExistence type="inferred from homology"/>
<protein>
    <recommendedName>
        <fullName>Caveolin-2</fullName>
    </recommendedName>
</protein>
<sequence length="162" mass="18191">MGLETEKTDVQLFMDDDSYSHHSGLEYADPEKFADSGQDRDPHQLNSHLKLGFEDVIAEPVTTHSFDKVWICSHALFEISKYVMYKFLTVFLAIPLAFLAGILFATLSCLHIWIIMPFVKTCLMVLPSVQTIWKSVTDAIVAPLCTSIGRSFSSVSLQLSQD</sequence>
<accession>Q07DW0</accession>
<evidence type="ECO:0000250" key="1"/>
<evidence type="ECO:0000250" key="2">
    <source>
        <dbReference type="UniProtKB" id="P51636"/>
    </source>
</evidence>
<evidence type="ECO:0000250" key="3">
    <source>
        <dbReference type="UniProtKB" id="Q9WVC3"/>
    </source>
</evidence>
<evidence type="ECO:0000255" key="4"/>
<evidence type="ECO:0000305" key="5"/>